<keyword id="KW-0031">Aminopeptidase</keyword>
<keyword id="KW-0963">Cytoplasm</keyword>
<keyword id="KW-0378">Hydrolase</keyword>
<keyword id="KW-0464">Manganese</keyword>
<keyword id="KW-0479">Metal-binding</keyword>
<keyword id="KW-0645">Protease</keyword>
<keyword id="KW-1185">Reference proteome</keyword>
<protein>
    <recommendedName>
        <fullName evidence="1">Probable cytosol aminopeptidase</fullName>
        <ecNumber evidence="1">3.4.11.1</ecNumber>
    </recommendedName>
    <alternativeName>
        <fullName evidence="1">Leucine aminopeptidase</fullName>
        <shortName evidence="1">LAP</shortName>
        <ecNumber evidence="1">3.4.11.10</ecNumber>
    </alternativeName>
    <alternativeName>
        <fullName evidence="1">Leucyl aminopeptidase</fullName>
    </alternativeName>
</protein>
<evidence type="ECO:0000255" key="1">
    <source>
        <dbReference type="HAMAP-Rule" id="MF_00181"/>
    </source>
</evidence>
<reference key="1">
    <citation type="submission" date="2007-10" db="EMBL/GenBank/DDBJ databases">
        <title>Complete sequence of chromosome 1 of Burkholderia multivorans ATCC 17616.</title>
        <authorList>
            <person name="Copeland A."/>
            <person name="Lucas S."/>
            <person name="Lapidus A."/>
            <person name="Barry K."/>
            <person name="Glavina del Rio T."/>
            <person name="Dalin E."/>
            <person name="Tice H."/>
            <person name="Pitluck S."/>
            <person name="Chain P."/>
            <person name="Malfatti S."/>
            <person name="Shin M."/>
            <person name="Vergez L."/>
            <person name="Schmutz J."/>
            <person name="Larimer F."/>
            <person name="Land M."/>
            <person name="Hauser L."/>
            <person name="Kyrpides N."/>
            <person name="Kim E."/>
            <person name="Tiedje J."/>
            <person name="Richardson P."/>
        </authorList>
    </citation>
    <scope>NUCLEOTIDE SEQUENCE [LARGE SCALE GENOMIC DNA]</scope>
    <source>
        <strain>ATCC 17616 / 249</strain>
    </source>
</reference>
<reference key="2">
    <citation type="submission" date="2007-04" db="EMBL/GenBank/DDBJ databases">
        <title>Complete genome sequence of Burkholderia multivorans ATCC 17616.</title>
        <authorList>
            <person name="Ohtsubo Y."/>
            <person name="Yamashita A."/>
            <person name="Kurokawa K."/>
            <person name="Takami H."/>
            <person name="Yuhara S."/>
            <person name="Nishiyama E."/>
            <person name="Endo R."/>
            <person name="Miyazaki R."/>
            <person name="Ono A."/>
            <person name="Yano K."/>
            <person name="Ito M."/>
            <person name="Sota M."/>
            <person name="Yuji N."/>
            <person name="Hattori M."/>
            <person name="Tsuda M."/>
        </authorList>
    </citation>
    <scope>NUCLEOTIDE SEQUENCE [LARGE SCALE GENOMIC DNA]</scope>
    <source>
        <strain>ATCC 17616 / 249</strain>
    </source>
</reference>
<dbReference type="EC" id="3.4.11.1" evidence="1"/>
<dbReference type="EC" id="3.4.11.10" evidence="1"/>
<dbReference type="EMBL" id="CP000868">
    <property type="protein sequence ID" value="ABX14522.1"/>
    <property type="molecule type" value="Genomic_DNA"/>
</dbReference>
<dbReference type="EMBL" id="AP009385">
    <property type="protein sequence ID" value="BAG44324.1"/>
    <property type="molecule type" value="Genomic_DNA"/>
</dbReference>
<dbReference type="RefSeq" id="WP_006398581.1">
    <property type="nucleotide sequence ID" value="NC_010804.1"/>
</dbReference>
<dbReference type="SMR" id="A9AHG9"/>
<dbReference type="STRING" id="395019.BMULJ_02430"/>
<dbReference type="MEROPS" id="M17.003"/>
<dbReference type="KEGG" id="bmj:BMULJ_02430"/>
<dbReference type="KEGG" id="bmu:Bmul_0828"/>
<dbReference type="eggNOG" id="COG0260">
    <property type="taxonomic scope" value="Bacteria"/>
</dbReference>
<dbReference type="HOGENOM" id="CLU_013734_0_1_4"/>
<dbReference type="Proteomes" id="UP000008815">
    <property type="component" value="Chromosome 1"/>
</dbReference>
<dbReference type="GO" id="GO:0005737">
    <property type="term" value="C:cytoplasm"/>
    <property type="evidence" value="ECO:0007669"/>
    <property type="project" value="UniProtKB-SubCell"/>
</dbReference>
<dbReference type="GO" id="GO:0030145">
    <property type="term" value="F:manganese ion binding"/>
    <property type="evidence" value="ECO:0007669"/>
    <property type="project" value="UniProtKB-UniRule"/>
</dbReference>
<dbReference type="GO" id="GO:0070006">
    <property type="term" value="F:metalloaminopeptidase activity"/>
    <property type="evidence" value="ECO:0007669"/>
    <property type="project" value="InterPro"/>
</dbReference>
<dbReference type="GO" id="GO:0006508">
    <property type="term" value="P:proteolysis"/>
    <property type="evidence" value="ECO:0007669"/>
    <property type="project" value="UniProtKB-KW"/>
</dbReference>
<dbReference type="CDD" id="cd00433">
    <property type="entry name" value="Peptidase_M17"/>
    <property type="match status" value="1"/>
</dbReference>
<dbReference type="FunFam" id="3.40.630.10:FF:000004">
    <property type="entry name" value="Probable cytosol aminopeptidase"/>
    <property type="match status" value="1"/>
</dbReference>
<dbReference type="Gene3D" id="3.40.220.10">
    <property type="entry name" value="Leucine Aminopeptidase, subunit E, domain 1"/>
    <property type="match status" value="1"/>
</dbReference>
<dbReference type="Gene3D" id="3.40.630.10">
    <property type="entry name" value="Zn peptidases"/>
    <property type="match status" value="1"/>
</dbReference>
<dbReference type="HAMAP" id="MF_00181">
    <property type="entry name" value="Cytosol_peptidase_M17"/>
    <property type="match status" value="1"/>
</dbReference>
<dbReference type="InterPro" id="IPR011356">
    <property type="entry name" value="Leucine_aapep/pepB"/>
</dbReference>
<dbReference type="InterPro" id="IPR043472">
    <property type="entry name" value="Macro_dom-like"/>
</dbReference>
<dbReference type="InterPro" id="IPR000819">
    <property type="entry name" value="Peptidase_M17_C"/>
</dbReference>
<dbReference type="InterPro" id="IPR023042">
    <property type="entry name" value="Peptidase_M17_leu_NH2_pept"/>
</dbReference>
<dbReference type="InterPro" id="IPR008283">
    <property type="entry name" value="Peptidase_M17_N"/>
</dbReference>
<dbReference type="NCBIfam" id="NF002073">
    <property type="entry name" value="PRK00913.1-2"/>
    <property type="match status" value="1"/>
</dbReference>
<dbReference type="NCBIfam" id="NF002074">
    <property type="entry name" value="PRK00913.1-4"/>
    <property type="match status" value="1"/>
</dbReference>
<dbReference type="NCBIfam" id="NF002077">
    <property type="entry name" value="PRK00913.2-4"/>
    <property type="match status" value="1"/>
</dbReference>
<dbReference type="NCBIfam" id="NF002083">
    <property type="entry name" value="PRK00913.3-5"/>
    <property type="match status" value="1"/>
</dbReference>
<dbReference type="PANTHER" id="PTHR11963:SF23">
    <property type="entry name" value="CYTOSOL AMINOPEPTIDASE"/>
    <property type="match status" value="1"/>
</dbReference>
<dbReference type="PANTHER" id="PTHR11963">
    <property type="entry name" value="LEUCINE AMINOPEPTIDASE-RELATED"/>
    <property type="match status" value="1"/>
</dbReference>
<dbReference type="Pfam" id="PF00883">
    <property type="entry name" value="Peptidase_M17"/>
    <property type="match status" value="1"/>
</dbReference>
<dbReference type="Pfam" id="PF02789">
    <property type="entry name" value="Peptidase_M17_N"/>
    <property type="match status" value="1"/>
</dbReference>
<dbReference type="PRINTS" id="PR00481">
    <property type="entry name" value="LAMNOPPTDASE"/>
</dbReference>
<dbReference type="SUPFAM" id="SSF52949">
    <property type="entry name" value="Macro domain-like"/>
    <property type="match status" value="1"/>
</dbReference>
<dbReference type="SUPFAM" id="SSF53187">
    <property type="entry name" value="Zn-dependent exopeptidases"/>
    <property type="match status" value="1"/>
</dbReference>
<dbReference type="PROSITE" id="PS00631">
    <property type="entry name" value="CYTOSOL_AP"/>
    <property type="match status" value="1"/>
</dbReference>
<accession>A9AHG9</accession>
<proteinExistence type="inferred from homology"/>
<name>AMPA_BURM1</name>
<comment type="function">
    <text evidence="1">Presumably involved in the processing and regular turnover of intracellular proteins. Catalyzes the removal of unsubstituted N-terminal amino acids from various peptides.</text>
</comment>
<comment type="catalytic activity">
    <reaction evidence="1">
        <text>Release of an N-terminal amino acid, Xaa-|-Yaa-, in which Xaa is preferably Leu, but may be other amino acids including Pro although not Arg or Lys, and Yaa may be Pro. Amino acid amides and methyl esters are also readily hydrolyzed, but rates on arylamides are exceedingly low.</text>
        <dbReference type="EC" id="3.4.11.1"/>
    </reaction>
</comment>
<comment type="catalytic activity">
    <reaction evidence="1">
        <text>Release of an N-terminal amino acid, preferentially leucine, but not glutamic or aspartic acids.</text>
        <dbReference type="EC" id="3.4.11.10"/>
    </reaction>
</comment>
<comment type="cofactor">
    <cofactor evidence="1">
        <name>Mn(2+)</name>
        <dbReference type="ChEBI" id="CHEBI:29035"/>
    </cofactor>
    <text evidence="1">Binds 2 manganese ions per subunit.</text>
</comment>
<comment type="subcellular location">
    <subcellularLocation>
        <location evidence="1">Cytoplasm</location>
    </subcellularLocation>
</comment>
<comment type="similarity">
    <text evidence="1">Belongs to the peptidase M17 family.</text>
</comment>
<feature type="chain" id="PRO_1000098309" description="Probable cytosol aminopeptidase">
    <location>
        <begin position="1"/>
        <end position="503"/>
    </location>
</feature>
<feature type="active site" evidence="1">
    <location>
        <position position="286"/>
    </location>
</feature>
<feature type="active site" evidence="1">
    <location>
        <position position="360"/>
    </location>
</feature>
<feature type="binding site" evidence="1">
    <location>
        <position position="274"/>
    </location>
    <ligand>
        <name>Mn(2+)</name>
        <dbReference type="ChEBI" id="CHEBI:29035"/>
        <label>2</label>
    </ligand>
</feature>
<feature type="binding site" evidence="1">
    <location>
        <position position="279"/>
    </location>
    <ligand>
        <name>Mn(2+)</name>
        <dbReference type="ChEBI" id="CHEBI:29035"/>
        <label>1</label>
    </ligand>
</feature>
<feature type="binding site" evidence="1">
    <location>
        <position position="279"/>
    </location>
    <ligand>
        <name>Mn(2+)</name>
        <dbReference type="ChEBI" id="CHEBI:29035"/>
        <label>2</label>
    </ligand>
</feature>
<feature type="binding site" evidence="1">
    <location>
        <position position="297"/>
    </location>
    <ligand>
        <name>Mn(2+)</name>
        <dbReference type="ChEBI" id="CHEBI:29035"/>
        <label>2</label>
    </ligand>
</feature>
<feature type="binding site" evidence="1">
    <location>
        <position position="356"/>
    </location>
    <ligand>
        <name>Mn(2+)</name>
        <dbReference type="ChEBI" id="CHEBI:29035"/>
        <label>1</label>
    </ligand>
</feature>
<feature type="binding site" evidence="1">
    <location>
        <position position="358"/>
    </location>
    <ligand>
        <name>Mn(2+)</name>
        <dbReference type="ChEBI" id="CHEBI:29035"/>
        <label>1</label>
    </ligand>
</feature>
<feature type="binding site" evidence="1">
    <location>
        <position position="358"/>
    </location>
    <ligand>
        <name>Mn(2+)</name>
        <dbReference type="ChEBI" id="CHEBI:29035"/>
        <label>2</label>
    </ligand>
</feature>
<sequence>MDFSIKGCDWSKGEAKGFLTGKSDCIVLGIFEAQTLSGAALDIDTATKGLISRVVKAGDMDGKRGKTLFLPEVSGIGASRVLLVGLGKQDAFNQKAYNDAVTAAWRALLATKVVQVTFTLAQLPVDERGSDWGVRAAILALRNETYRFTQMKSKPEPVSHTLKRVVFSVEPADEKAAKVAVKQAVALANGMDLTRDLGNLPGNVCTPTYLANTAKQLAKDWGMKAEVLGLKQIQALKMGSFLSVARASVEPPQFIVLHYQGAAAKAAPIVLVGKGITFDTGGISLKPGEGMDEMKYDMCGAGSVLGTIRAVAEMGLKLNVVGIIPTCENMPGGNATKPGDVVTSMKGLTIEVLNTDAEGRLILCDALTYAERFKPAAVIDIATLTGACIIALGHHNSGLFSKDDALAGELLDASREANDPAWRLPLDDEYQDQLKSNFADLANIGGRPAGSVTAACFLSRFTENYPWAHLDIAGTAWKSGAAKGATGRPVPLLAQFLIDRAGQ</sequence>
<organism>
    <name type="scientific">Burkholderia multivorans (strain ATCC 17616 / 249)</name>
    <dbReference type="NCBI Taxonomy" id="395019"/>
    <lineage>
        <taxon>Bacteria</taxon>
        <taxon>Pseudomonadati</taxon>
        <taxon>Pseudomonadota</taxon>
        <taxon>Betaproteobacteria</taxon>
        <taxon>Burkholderiales</taxon>
        <taxon>Burkholderiaceae</taxon>
        <taxon>Burkholderia</taxon>
        <taxon>Burkholderia cepacia complex</taxon>
    </lineage>
</organism>
<gene>
    <name evidence="1" type="primary">pepA</name>
    <name type="ordered locus">Bmul_0828</name>
    <name type="ordered locus">BMULJ_02430</name>
</gene>